<proteinExistence type="evidence at protein level"/>
<name>RS14Z_PYRAB</name>
<dbReference type="EMBL" id="AJ248284">
    <property type="protein sequence ID" value="CAB49249.1"/>
    <property type="molecule type" value="Genomic_DNA"/>
</dbReference>
<dbReference type="EMBL" id="HE613800">
    <property type="protein sequence ID" value="CCE69704.1"/>
    <property type="molecule type" value="Genomic_DNA"/>
</dbReference>
<dbReference type="PIR" id="B75146">
    <property type="entry name" value="B75146"/>
</dbReference>
<dbReference type="RefSeq" id="WP_010867449.1">
    <property type="nucleotide sequence ID" value="NC_000868.1"/>
</dbReference>
<dbReference type="PDB" id="6SW9">
    <property type="method" value="EM"/>
    <property type="resolution" value="4.20 A"/>
    <property type="chains" value="P=1-56"/>
</dbReference>
<dbReference type="PDB" id="6SWC">
    <property type="method" value="EM"/>
    <property type="resolution" value="3.30 A"/>
    <property type="chains" value="P=1-56"/>
</dbReference>
<dbReference type="PDB" id="6SWE">
    <property type="method" value="EM"/>
    <property type="resolution" value="3.10 A"/>
    <property type="chains" value="P=1-56"/>
</dbReference>
<dbReference type="PDB" id="7ZAG">
    <property type="method" value="EM"/>
    <property type="resolution" value="2.77 A"/>
    <property type="chains" value="P=1-56"/>
</dbReference>
<dbReference type="PDB" id="7ZAH">
    <property type="method" value="EM"/>
    <property type="resolution" value="2.70 A"/>
    <property type="chains" value="P=1-56"/>
</dbReference>
<dbReference type="PDB" id="7ZAI">
    <property type="method" value="EM"/>
    <property type="resolution" value="2.60 A"/>
    <property type="chains" value="P=1-56"/>
</dbReference>
<dbReference type="PDB" id="7ZHG">
    <property type="method" value="EM"/>
    <property type="resolution" value="2.25 A"/>
    <property type="chains" value="P=1-56"/>
</dbReference>
<dbReference type="PDBsum" id="6SW9"/>
<dbReference type="PDBsum" id="6SWC"/>
<dbReference type="PDBsum" id="6SWE"/>
<dbReference type="PDBsum" id="7ZAG"/>
<dbReference type="PDBsum" id="7ZAH"/>
<dbReference type="PDBsum" id="7ZAI"/>
<dbReference type="PDBsum" id="7ZHG"/>
<dbReference type="EMDB" id="EMD-10320"/>
<dbReference type="EMDB" id="EMD-10322"/>
<dbReference type="EMDB" id="EMD-10324"/>
<dbReference type="EMDB" id="EMD-14579"/>
<dbReference type="EMDB" id="EMD-14580"/>
<dbReference type="EMDB" id="EMD-14581"/>
<dbReference type="EMDB" id="EMD-14731"/>
<dbReference type="EMDB" id="EMD-8148"/>
<dbReference type="SMR" id="P62012"/>
<dbReference type="STRING" id="272844.PAB7080"/>
<dbReference type="KEGG" id="pab:PAB7080"/>
<dbReference type="PATRIC" id="fig|272844.11.peg.348"/>
<dbReference type="eggNOG" id="arCOG00782">
    <property type="taxonomic scope" value="Archaea"/>
</dbReference>
<dbReference type="HOGENOM" id="CLU_177289_2_2_2"/>
<dbReference type="OrthoDB" id="5615at2157"/>
<dbReference type="PhylomeDB" id="P62012"/>
<dbReference type="Proteomes" id="UP000000810">
    <property type="component" value="Chromosome"/>
</dbReference>
<dbReference type="Proteomes" id="UP000009139">
    <property type="component" value="Chromosome"/>
</dbReference>
<dbReference type="GO" id="GO:0022627">
    <property type="term" value="C:cytosolic small ribosomal subunit"/>
    <property type="evidence" value="ECO:0007669"/>
    <property type="project" value="TreeGrafter"/>
</dbReference>
<dbReference type="GO" id="GO:0019843">
    <property type="term" value="F:rRNA binding"/>
    <property type="evidence" value="ECO:0007669"/>
    <property type="project" value="UniProtKB-UniRule"/>
</dbReference>
<dbReference type="GO" id="GO:0003735">
    <property type="term" value="F:structural constituent of ribosome"/>
    <property type="evidence" value="ECO:0007669"/>
    <property type="project" value="InterPro"/>
</dbReference>
<dbReference type="GO" id="GO:0008270">
    <property type="term" value="F:zinc ion binding"/>
    <property type="evidence" value="ECO:0007669"/>
    <property type="project" value="UniProtKB-UniRule"/>
</dbReference>
<dbReference type="GO" id="GO:0002181">
    <property type="term" value="P:cytoplasmic translation"/>
    <property type="evidence" value="ECO:0007669"/>
    <property type="project" value="TreeGrafter"/>
</dbReference>
<dbReference type="FunFam" id="4.10.830.10:FF:000002">
    <property type="entry name" value="40S ribosomal protein S29"/>
    <property type="match status" value="1"/>
</dbReference>
<dbReference type="Gene3D" id="4.10.830.10">
    <property type="entry name" value="30s Ribosomal Protein S14, Chain N"/>
    <property type="match status" value="1"/>
</dbReference>
<dbReference type="HAMAP" id="MF_01364_A">
    <property type="entry name" value="Ribosomal_uS14_2_A"/>
    <property type="match status" value="1"/>
</dbReference>
<dbReference type="InterPro" id="IPR001209">
    <property type="entry name" value="Ribosomal_uS14"/>
</dbReference>
<dbReference type="InterPro" id="IPR023676">
    <property type="entry name" value="Ribosomal_uS14_arc"/>
</dbReference>
<dbReference type="InterPro" id="IPR018271">
    <property type="entry name" value="Ribosomal_uS14_CS"/>
</dbReference>
<dbReference type="InterPro" id="IPR039744">
    <property type="entry name" value="RIbosomal_uS14_euk_arc"/>
</dbReference>
<dbReference type="InterPro" id="IPR043140">
    <property type="entry name" value="Ribosomal_uS14_sf"/>
</dbReference>
<dbReference type="NCBIfam" id="NF004424">
    <property type="entry name" value="PRK05766.1"/>
    <property type="match status" value="1"/>
</dbReference>
<dbReference type="PANTHER" id="PTHR12010">
    <property type="entry name" value="40S RIBOSOMAL PROTEIN S29"/>
    <property type="match status" value="1"/>
</dbReference>
<dbReference type="PANTHER" id="PTHR12010:SF2">
    <property type="entry name" value="40S RIBOSOMAL PROTEIN S29"/>
    <property type="match status" value="1"/>
</dbReference>
<dbReference type="Pfam" id="PF00253">
    <property type="entry name" value="Ribosomal_S14"/>
    <property type="match status" value="1"/>
</dbReference>
<dbReference type="PROSITE" id="PS00527">
    <property type="entry name" value="RIBOSOMAL_S14"/>
    <property type="match status" value="1"/>
</dbReference>
<gene>
    <name evidence="1" type="primary">rps14</name>
    <name type="ordered locus">PYRAB03270</name>
    <name type="ORF">PAB7080</name>
</gene>
<feature type="chain" id="PRO_0000130995" description="Small ribosomal subunit protein uS14">
    <location>
        <begin position="1"/>
        <end position="56"/>
    </location>
</feature>
<feature type="binding site" evidence="1">
    <location>
        <position position="21"/>
    </location>
    <ligand>
        <name>Zn(2+)</name>
        <dbReference type="ChEBI" id="CHEBI:29105"/>
    </ligand>
</feature>
<feature type="binding site" evidence="1">
    <location>
        <position position="24"/>
    </location>
    <ligand>
        <name>Zn(2+)</name>
        <dbReference type="ChEBI" id="CHEBI:29105"/>
    </ligand>
</feature>
<feature type="binding site" evidence="1">
    <location>
        <position position="39"/>
    </location>
    <ligand>
        <name>Zn(2+)</name>
        <dbReference type="ChEBI" id="CHEBI:29105"/>
    </ligand>
</feature>
<feature type="binding site" evidence="1">
    <location>
        <position position="42"/>
    </location>
    <ligand>
        <name>Zn(2+)</name>
        <dbReference type="ChEBI" id="CHEBI:29105"/>
    </ligand>
</feature>
<feature type="helix" evidence="4">
    <location>
        <begin position="4"/>
        <end position="6"/>
    </location>
</feature>
<feature type="strand" evidence="4">
    <location>
        <begin position="13"/>
        <end position="15"/>
    </location>
</feature>
<feature type="helix" evidence="4">
    <location>
        <begin position="16"/>
        <end position="18"/>
    </location>
</feature>
<feature type="turn" evidence="4">
    <location>
        <begin position="22"/>
        <end position="24"/>
    </location>
</feature>
<feature type="strand" evidence="3">
    <location>
        <begin position="28"/>
        <end position="30"/>
    </location>
</feature>
<feature type="helix" evidence="4">
    <location>
        <begin position="33"/>
        <end position="35"/>
    </location>
</feature>
<feature type="helix" evidence="4">
    <location>
        <begin position="40"/>
        <end position="50"/>
    </location>
</feature>
<organism>
    <name type="scientific">Pyrococcus abyssi (strain GE5 / Orsay)</name>
    <dbReference type="NCBI Taxonomy" id="272844"/>
    <lineage>
        <taxon>Archaea</taxon>
        <taxon>Methanobacteriati</taxon>
        <taxon>Methanobacteriota</taxon>
        <taxon>Thermococci</taxon>
        <taxon>Thermococcales</taxon>
        <taxon>Thermococcaceae</taxon>
        <taxon>Pyrococcus</taxon>
    </lineage>
</organism>
<comment type="function">
    <text evidence="1">Binds 16S rRNA, required for the assembly of 30S particles.</text>
</comment>
<comment type="cofactor">
    <cofactor evidence="1">
        <name>Zn(2+)</name>
        <dbReference type="ChEBI" id="CHEBI:29105"/>
    </cofactor>
    <text evidence="1">Binds 1 zinc ion per subunit.</text>
</comment>
<comment type="subunit">
    <text evidence="1">Part of the 30S ribosomal subunit.</text>
</comment>
<comment type="similarity">
    <text evidence="1">Belongs to the universal ribosomal protein uS14 family. Zinc-binding uS14 subfamily.</text>
</comment>
<sequence>MAKADYNKRKPRKFGKGARRCIRCGQYGPIIRIHGLMLCRHCFREVAPKLGFRKYE</sequence>
<reference key="1">
    <citation type="journal article" date="2003" name="Mol. Microbiol.">
        <title>An integrated analysis of the genome of the hyperthermophilic archaeon Pyrococcus abyssi.</title>
        <authorList>
            <person name="Cohen G.N."/>
            <person name="Barbe V."/>
            <person name="Flament D."/>
            <person name="Galperin M."/>
            <person name="Heilig R."/>
            <person name="Lecompte O."/>
            <person name="Poch O."/>
            <person name="Prieur D."/>
            <person name="Querellou J."/>
            <person name="Ripp R."/>
            <person name="Thierry J.-C."/>
            <person name="Van der Oost J."/>
            <person name="Weissenbach J."/>
            <person name="Zivanovic Y."/>
            <person name="Forterre P."/>
        </authorList>
    </citation>
    <scope>NUCLEOTIDE SEQUENCE [LARGE SCALE GENOMIC DNA]</scope>
    <source>
        <strain>GE5 / Orsay</strain>
    </source>
</reference>
<reference key="2">
    <citation type="journal article" date="2012" name="Curr. Microbiol.">
        <title>Re-annotation of two hyperthermophilic archaea Pyrococcus abyssi GE5 and Pyrococcus furiosus DSM 3638.</title>
        <authorList>
            <person name="Gao J."/>
            <person name="Wang J."/>
        </authorList>
    </citation>
    <scope>GENOME REANNOTATION</scope>
    <source>
        <strain>GE5 / Orsay</strain>
    </source>
</reference>
<protein>
    <recommendedName>
        <fullName evidence="1">Small ribosomal subunit protein uS14</fullName>
    </recommendedName>
    <alternativeName>
        <fullName evidence="2">30S ribosomal protein S14 type Z</fullName>
    </alternativeName>
</protein>
<keyword id="KW-0002">3D-structure</keyword>
<keyword id="KW-0479">Metal-binding</keyword>
<keyword id="KW-0687">Ribonucleoprotein</keyword>
<keyword id="KW-0689">Ribosomal protein</keyword>
<keyword id="KW-0694">RNA-binding</keyword>
<keyword id="KW-0699">rRNA-binding</keyword>
<keyword id="KW-0862">Zinc</keyword>
<evidence type="ECO:0000255" key="1">
    <source>
        <dbReference type="HAMAP-Rule" id="MF_01364"/>
    </source>
</evidence>
<evidence type="ECO:0000305" key="2"/>
<evidence type="ECO:0007829" key="3">
    <source>
        <dbReference type="PDB" id="6SWC"/>
    </source>
</evidence>
<evidence type="ECO:0007829" key="4">
    <source>
        <dbReference type="PDB" id="7ZHG"/>
    </source>
</evidence>
<accession>P62012</accession>
<accession>G8ZHW1</accession>
<accession>O74093</accession>